<proteinExistence type="evidence at protein level"/>
<feature type="chain" id="PRO_0000314644" description="Endochitinase 1">
    <location>
        <begin position="1" status="less than"/>
        <end position="16" status="greater than"/>
    </location>
</feature>
<feature type="non-terminal residue" evidence="2">
    <location>
        <position position="1"/>
    </location>
</feature>
<feature type="non-terminal residue" evidence="2">
    <location>
        <position position="16"/>
    </location>
</feature>
<organism>
    <name type="scientific">Ginkgo biloba</name>
    <name type="common">Ginkgo</name>
    <name type="synonym">Maidenhair tree</name>
    <dbReference type="NCBI Taxonomy" id="3311"/>
    <lineage>
        <taxon>Eukaryota</taxon>
        <taxon>Viridiplantae</taxon>
        <taxon>Streptophyta</taxon>
        <taxon>Embryophyta</taxon>
        <taxon>Tracheophyta</taxon>
        <taxon>Spermatophyta</taxon>
        <taxon>Ginkgoidae</taxon>
        <taxon>Ginkgoales</taxon>
        <taxon>Ginkgoaceae</taxon>
        <taxon>Ginkgo</taxon>
    </lineage>
</organism>
<keyword id="KW-0119">Carbohydrate metabolism</keyword>
<keyword id="KW-0146">Chitin degradation</keyword>
<keyword id="KW-0903">Direct protein sequencing</keyword>
<keyword id="KW-0326">Glycosidase</keyword>
<keyword id="KW-0378">Hydrolase</keyword>
<keyword id="KW-0611">Plant defense</keyword>
<keyword id="KW-0624">Polysaccharide degradation</keyword>
<evidence type="ECO:0000255" key="1"/>
<evidence type="ECO:0000305" key="2"/>
<accession>P85343</accession>
<sequence length="16" mass="1739">GPLQLSWNYNYGAAGK</sequence>
<protein>
    <recommendedName>
        <fullName>Endochitinase 1</fullName>
        <ecNumber>3.2.1.14</ecNumber>
    </recommendedName>
</protein>
<dbReference type="EC" id="3.2.1.14"/>
<dbReference type="GO" id="GO:0008843">
    <property type="term" value="F:endochitinase activity"/>
    <property type="evidence" value="ECO:0007669"/>
    <property type="project" value="UniProtKB-EC"/>
</dbReference>
<dbReference type="GO" id="GO:0006032">
    <property type="term" value="P:chitin catabolic process"/>
    <property type="evidence" value="ECO:0007669"/>
    <property type="project" value="UniProtKB-KW"/>
</dbReference>
<dbReference type="GO" id="GO:0006952">
    <property type="term" value="P:defense response"/>
    <property type="evidence" value="ECO:0007669"/>
    <property type="project" value="UniProtKB-KW"/>
</dbReference>
<dbReference type="GO" id="GO:0000272">
    <property type="term" value="P:polysaccharide catabolic process"/>
    <property type="evidence" value="ECO:0007669"/>
    <property type="project" value="UniProtKB-KW"/>
</dbReference>
<dbReference type="Gene3D" id="3.30.20.10">
    <property type="entry name" value="Endochitinase, domain 2"/>
    <property type="match status" value="1"/>
</dbReference>
<dbReference type="InterPro" id="IPR023346">
    <property type="entry name" value="Lysozyme-like_dom_sf"/>
</dbReference>
<dbReference type="SUPFAM" id="SSF53955">
    <property type="entry name" value="Lysozyme-like"/>
    <property type="match status" value="1"/>
</dbReference>
<reference key="1">
    <citation type="journal article" date="2009" name="Physiol. Plantarum">
        <title>The presence of sinapyl lignin in Ginkgo biloba cell cultures changes our views of the evolution of lignin biosynthesis.</title>
        <authorList>
            <person name="Novo Uzal E."/>
            <person name="Gomez Ros L.V."/>
            <person name="Pomar F."/>
            <person name="Bernal M.A."/>
            <person name="Paradela A."/>
            <person name="Albar J.P."/>
            <person name="Ros Barcelo A."/>
        </authorList>
    </citation>
    <scope>PROTEIN SEQUENCE</scope>
    <source>
        <strain>PC-650</strain>
        <tissue>Callus</tissue>
    </source>
</reference>
<comment type="function">
    <text evidence="2">Defense against chitin-containing fungal pathogens.</text>
</comment>
<comment type="catalytic activity">
    <reaction>
        <text>Random endo-hydrolysis of N-acetyl-beta-D-glucosaminide (1-&gt;4)-beta-linkages in chitin and chitodextrins.</text>
        <dbReference type="EC" id="3.2.1.14"/>
    </reaction>
</comment>
<comment type="similarity">
    <text evidence="1">Belongs to the glycosyl hydrolase 19 family. Chitinase class I subfamily.</text>
</comment>
<name>CHI1_GINBI</name>